<protein>
    <recommendedName>
        <fullName evidence="1">Glutamate-1-semialdehyde 2,1-aminomutase</fullName>
        <shortName evidence="1">GSA</shortName>
        <ecNumber evidence="1">5.4.3.8</ecNumber>
    </recommendedName>
    <alternativeName>
        <fullName evidence="1">Glutamate-1-semialdehyde aminotransferase</fullName>
        <shortName evidence="1">GSA-AT</shortName>
    </alternativeName>
</protein>
<feature type="chain" id="PRO_0000120396" description="Glutamate-1-semialdehyde 2,1-aminomutase">
    <location>
        <begin position="1"/>
        <end position="424"/>
    </location>
</feature>
<feature type="modified residue" description="N6-(pyridoxal phosphate)lysine" evidence="1">
    <location>
        <position position="263"/>
    </location>
</feature>
<dbReference type="EC" id="5.4.3.8" evidence="1"/>
<dbReference type="EMBL" id="AL111168">
    <property type="protein sequence ID" value="CAL34981.1"/>
    <property type="molecule type" value="Genomic_DNA"/>
</dbReference>
<dbReference type="PIR" id="E81358">
    <property type="entry name" value="E81358"/>
</dbReference>
<dbReference type="RefSeq" id="WP_002864846.1">
    <property type="nucleotide sequence ID" value="NZ_SZUC01000001.1"/>
</dbReference>
<dbReference type="RefSeq" id="YP_002344260.1">
    <property type="nucleotide sequence ID" value="NC_002163.1"/>
</dbReference>
<dbReference type="SMR" id="Q9PP70"/>
<dbReference type="STRING" id="192222.Cj0853c"/>
<dbReference type="PaxDb" id="192222-Cj0853c"/>
<dbReference type="EnsemblBacteria" id="CAL34981">
    <property type="protein sequence ID" value="CAL34981"/>
    <property type="gene ID" value="Cj0853c"/>
</dbReference>
<dbReference type="GeneID" id="905185"/>
<dbReference type="KEGG" id="cje:Cj0853c"/>
<dbReference type="PATRIC" id="fig|192222.6.peg.841"/>
<dbReference type="eggNOG" id="COG0001">
    <property type="taxonomic scope" value="Bacteria"/>
</dbReference>
<dbReference type="HOGENOM" id="CLU_016922_1_5_7"/>
<dbReference type="OrthoDB" id="9801052at2"/>
<dbReference type="UniPathway" id="UPA00251">
    <property type="reaction ID" value="UER00317"/>
</dbReference>
<dbReference type="Proteomes" id="UP000000799">
    <property type="component" value="Chromosome"/>
</dbReference>
<dbReference type="GO" id="GO:0005737">
    <property type="term" value="C:cytoplasm"/>
    <property type="evidence" value="ECO:0007669"/>
    <property type="project" value="UniProtKB-SubCell"/>
</dbReference>
<dbReference type="GO" id="GO:0042286">
    <property type="term" value="F:glutamate-1-semialdehyde 2,1-aminomutase activity"/>
    <property type="evidence" value="ECO:0007669"/>
    <property type="project" value="UniProtKB-UniRule"/>
</dbReference>
<dbReference type="GO" id="GO:0030170">
    <property type="term" value="F:pyridoxal phosphate binding"/>
    <property type="evidence" value="ECO:0007669"/>
    <property type="project" value="InterPro"/>
</dbReference>
<dbReference type="GO" id="GO:0008483">
    <property type="term" value="F:transaminase activity"/>
    <property type="evidence" value="ECO:0007669"/>
    <property type="project" value="InterPro"/>
</dbReference>
<dbReference type="GO" id="GO:0006782">
    <property type="term" value="P:protoporphyrinogen IX biosynthetic process"/>
    <property type="evidence" value="ECO:0007669"/>
    <property type="project" value="UniProtKB-UniRule"/>
</dbReference>
<dbReference type="CDD" id="cd00610">
    <property type="entry name" value="OAT_like"/>
    <property type="match status" value="1"/>
</dbReference>
<dbReference type="FunFam" id="3.40.640.10:FF:000021">
    <property type="entry name" value="Glutamate-1-semialdehyde 2,1-aminomutase"/>
    <property type="match status" value="1"/>
</dbReference>
<dbReference type="Gene3D" id="3.90.1150.10">
    <property type="entry name" value="Aspartate Aminotransferase, domain 1"/>
    <property type="match status" value="1"/>
</dbReference>
<dbReference type="Gene3D" id="3.40.640.10">
    <property type="entry name" value="Type I PLP-dependent aspartate aminotransferase-like (Major domain)"/>
    <property type="match status" value="1"/>
</dbReference>
<dbReference type="HAMAP" id="MF_00375">
    <property type="entry name" value="HemL_aminotrans_3"/>
    <property type="match status" value="1"/>
</dbReference>
<dbReference type="InterPro" id="IPR004639">
    <property type="entry name" value="4pyrrol_synth_GluAld_NH2Trfase"/>
</dbReference>
<dbReference type="InterPro" id="IPR005814">
    <property type="entry name" value="Aminotrans_3"/>
</dbReference>
<dbReference type="InterPro" id="IPR049704">
    <property type="entry name" value="Aminotrans_3_PPA_site"/>
</dbReference>
<dbReference type="InterPro" id="IPR015424">
    <property type="entry name" value="PyrdxlP-dep_Trfase"/>
</dbReference>
<dbReference type="InterPro" id="IPR015421">
    <property type="entry name" value="PyrdxlP-dep_Trfase_major"/>
</dbReference>
<dbReference type="InterPro" id="IPR015422">
    <property type="entry name" value="PyrdxlP-dep_Trfase_small"/>
</dbReference>
<dbReference type="NCBIfam" id="TIGR00713">
    <property type="entry name" value="hemL"/>
    <property type="match status" value="1"/>
</dbReference>
<dbReference type="NCBIfam" id="NF000818">
    <property type="entry name" value="PRK00062.1"/>
    <property type="match status" value="1"/>
</dbReference>
<dbReference type="PANTHER" id="PTHR43713">
    <property type="entry name" value="GLUTAMATE-1-SEMIALDEHYDE 2,1-AMINOMUTASE"/>
    <property type="match status" value="1"/>
</dbReference>
<dbReference type="PANTHER" id="PTHR43713:SF3">
    <property type="entry name" value="GLUTAMATE-1-SEMIALDEHYDE 2,1-AMINOMUTASE 1, CHLOROPLASTIC-RELATED"/>
    <property type="match status" value="1"/>
</dbReference>
<dbReference type="Pfam" id="PF00202">
    <property type="entry name" value="Aminotran_3"/>
    <property type="match status" value="1"/>
</dbReference>
<dbReference type="SUPFAM" id="SSF53383">
    <property type="entry name" value="PLP-dependent transferases"/>
    <property type="match status" value="1"/>
</dbReference>
<dbReference type="PROSITE" id="PS00600">
    <property type="entry name" value="AA_TRANSFER_CLASS_3"/>
    <property type="match status" value="1"/>
</dbReference>
<proteinExistence type="inferred from homology"/>
<evidence type="ECO:0000255" key="1">
    <source>
        <dbReference type="HAMAP-Rule" id="MF_00375"/>
    </source>
</evidence>
<comment type="catalytic activity">
    <reaction evidence="1">
        <text>(S)-4-amino-5-oxopentanoate = 5-aminolevulinate</text>
        <dbReference type="Rhea" id="RHEA:14265"/>
        <dbReference type="ChEBI" id="CHEBI:57501"/>
        <dbReference type="ChEBI" id="CHEBI:356416"/>
        <dbReference type="EC" id="5.4.3.8"/>
    </reaction>
</comment>
<comment type="cofactor">
    <cofactor evidence="1">
        <name>pyridoxal 5'-phosphate</name>
        <dbReference type="ChEBI" id="CHEBI:597326"/>
    </cofactor>
</comment>
<comment type="pathway">
    <text evidence="1">Porphyrin-containing compound metabolism; protoporphyrin-IX biosynthesis; 5-aminolevulinate from L-glutamyl-tRNA(Glu): step 2/2.</text>
</comment>
<comment type="subunit">
    <text evidence="1">Homodimer.</text>
</comment>
<comment type="subcellular location">
    <subcellularLocation>
        <location evidence="1">Cytoplasm</location>
    </subcellularLocation>
</comment>
<comment type="similarity">
    <text evidence="1">Belongs to the class-III pyridoxal-phosphate-dependent aminotransferase family. HemL subfamily.</text>
</comment>
<keyword id="KW-0963">Cytoplasm</keyword>
<keyword id="KW-0413">Isomerase</keyword>
<keyword id="KW-0627">Porphyrin biosynthesis</keyword>
<keyword id="KW-0663">Pyridoxal phosphate</keyword>
<keyword id="KW-1185">Reference proteome</keyword>
<gene>
    <name evidence="1" type="primary">hemL</name>
    <name type="ordered locus">Cj0853</name>
</gene>
<organism>
    <name type="scientific">Campylobacter jejuni subsp. jejuni serotype O:2 (strain ATCC 700819 / NCTC 11168)</name>
    <dbReference type="NCBI Taxonomy" id="192222"/>
    <lineage>
        <taxon>Bacteria</taxon>
        <taxon>Pseudomonadati</taxon>
        <taxon>Campylobacterota</taxon>
        <taxon>Epsilonproteobacteria</taxon>
        <taxon>Campylobacterales</taxon>
        <taxon>Campylobacteraceae</taxon>
        <taxon>Campylobacter</taxon>
    </lineage>
</organism>
<name>GSA_CAMJE</name>
<sequence>MTNKKAFKETCKFIAGGVNSPVRAFANVQSEPKFISHGKGAYIFDIDGNSYIDYVQSWGPLLFGHCDKDIQKACQKALHKGSSFGAPTLLETELAKLVLSDFPHLEKIRFVSSGTEATMSAIRLARGFTKKDKILKFEGCYHGHSDSLLVSAGSGAATFNSPSSLGVLEDVAKHTLVAKYNDINSVKELFEKNKDIACVIIEPIAGNMGLVPAKQDFLEELAKICKNNQTLLIFDEVMSGYRASYLGSYGINHIQADIITFGKVIGGGLPAAAFASRAEIMDILSPLGGVYQAGTLSGNPLAMAAGIASLTKAKKKTKLYDKLGKLAKKLTQGMKKLADEKGLPLQACHVGSMFGYFFTKDPVSNYQDALKSDLALFSKFHKNMLENGIYLAPSQFETGFICSKMDDKIIDTTLEAVRESFKRI</sequence>
<reference key="1">
    <citation type="journal article" date="2000" name="Nature">
        <title>The genome sequence of the food-borne pathogen Campylobacter jejuni reveals hypervariable sequences.</title>
        <authorList>
            <person name="Parkhill J."/>
            <person name="Wren B.W."/>
            <person name="Mungall K.L."/>
            <person name="Ketley J.M."/>
            <person name="Churcher C.M."/>
            <person name="Basham D."/>
            <person name="Chillingworth T."/>
            <person name="Davies R.M."/>
            <person name="Feltwell T."/>
            <person name="Holroyd S."/>
            <person name="Jagels K."/>
            <person name="Karlyshev A.V."/>
            <person name="Moule S."/>
            <person name="Pallen M.J."/>
            <person name="Penn C.W."/>
            <person name="Quail M.A."/>
            <person name="Rajandream M.A."/>
            <person name="Rutherford K.M."/>
            <person name="van Vliet A.H.M."/>
            <person name="Whitehead S."/>
            <person name="Barrell B.G."/>
        </authorList>
    </citation>
    <scope>NUCLEOTIDE SEQUENCE [LARGE SCALE GENOMIC DNA]</scope>
    <source>
        <strain>ATCC 700819 / NCTC 11168</strain>
    </source>
</reference>
<accession>Q9PP70</accession>
<accession>Q0PA37</accession>